<accession>B0UUR6</accession>
<feature type="chain" id="PRO_1000087535" description="Malate dehydrogenase">
    <location>
        <begin position="1"/>
        <end position="311"/>
    </location>
</feature>
<feature type="active site" description="Proton acceptor" evidence="1">
    <location>
        <position position="177"/>
    </location>
</feature>
<feature type="binding site" evidence="1">
    <location>
        <begin position="7"/>
        <end position="13"/>
    </location>
    <ligand>
        <name>NAD(+)</name>
        <dbReference type="ChEBI" id="CHEBI:57540"/>
    </ligand>
</feature>
<feature type="binding site" evidence="1">
    <location>
        <position position="34"/>
    </location>
    <ligand>
        <name>NAD(+)</name>
        <dbReference type="ChEBI" id="CHEBI:57540"/>
    </ligand>
</feature>
<feature type="binding site" evidence="1">
    <location>
        <position position="81"/>
    </location>
    <ligand>
        <name>substrate</name>
    </ligand>
</feature>
<feature type="binding site" evidence="1">
    <location>
        <position position="87"/>
    </location>
    <ligand>
        <name>substrate</name>
    </ligand>
</feature>
<feature type="binding site" evidence="1">
    <location>
        <position position="94"/>
    </location>
    <ligand>
        <name>NAD(+)</name>
        <dbReference type="ChEBI" id="CHEBI:57540"/>
    </ligand>
</feature>
<feature type="binding site" evidence="1">
    <location>
        <begin position="117"/>
        <end position="119"/>
    </location>
    <ligand>
        <name>NAD(+)</name>
        <dbReference type="ChEBI" id="CHEBI:57540"/>
    </ligand>
</feature>
<feature type="binding site" evidence="1">
    <location>
        <position position="119"/>
    </location>
    <ligand>
        <name>substrate</name>
    </ligand>
</feature>
<feature type="binding site" evidence="1">
    <location>
        <position position="153"/>
    </location>
    <ligand>
        <name>substrate</name>
    </ligand>
</feature>
<feature type="binding site" evidence="1">
    <location>
        <position position="227"/>
    </location>
    <ligand>
        <name>NAD(+)</name>
        <dbReference type="ChEBI" id="CHEBI:57540"/>
    </ligand>
</feature>
<organism>
    <name type="scientific">Histophilus somni (strain 2336)</name>
    <name type="common">Haemophilus somnus</name>
    <dbReference type="NCBI Taxonomy" id="228400"/>
    <lineage>
        <taxon>Bacteria</taxon>
        <taxon>Pseudomonadati</taxon>
        <taxon>Pseudomonadota</taxon>
        <taxon>Gammaproteobacteria</taxon>
        <taxon>Pasteurellales</taxon>
        <taxon>Pasteurellaceae</taxon>
        <taxon>Histophilus</taxon>
    </lineage>
</organism>
<sequence>MKIAVLGAAGGIGQALALLLKLQLPAGSELSLYDIAPVTPGVAADVSHIPTAVKIQGFAGEDPIPALENADVVLISAGVARKPGMDRSDLFNINAGIVKNLIEKVAKTCPKACVGIITNPVNTTVAIAAEVLKKAGVYDKRKLFGVTTLDVLRSETFVAELKGLNVSRIAVPVIGGHSGVTILPLLSQVQYTEWKEDEIAPLTKRIQNAGTEVVEAKAGGGSATLSMAQAAARFALSLVQGLSGETVVECTYVEGDGKYARFFAQPVRLGKEGVEEILPVGTLSAFEQKALEDMLPTLRADIELGEKFVNN</sequence>
<gene>
    <name evidence="1" type="primary">mdh</name>
    <name type="ordered locus">HSM_1539</name>
</gene>
<protein>
    <recommendedName>
        <fullName evidence="1">Malate dehydrogenase</fullName>
        <ecNumber evidence="1">1.1.1.37</ecNumber>
    </recommendedName>
</protein>
<dbReference type="EC" id="1.1.1.37" evidence="1"/>
<dbReference type="EMBL" id="CP000947">
    <property type="protein sequence ID" value="ACA31295.1"/>
    <property type="molecule type" value="Genomic_DNA"/>
</dbReference>
<dbReference type="RefSeq" id="WP_012340678.1">
    <property type="nucleotide sequence ID" value="NC_010519.1"/>
</dbReference>
<dbReference type="SMR" id="B0UUR6"/>
<dbReference type="STRING" id="228400.HSM_1539"/>
<dbReference type="GeneID" id="31487842"/>
<dbReference type="KEGG" id="hsm:HSM_1539"/>
<dbReference type="HOGENOM" id="CLU_047181_1_0_6"/>
<dbReference type="GO" id="GO:0005737">
    <property type="term" value="C:cytoplasm"/>
    <property type="evidence" value="ECO:0007669"/>
    <property type="project" value="TreeGrafter"/>
</dbReference>
<dbReference type="GO" id="GO:0030060">
    <property type="term" value="F:L-malate dehydrogenase (NAD+) activity"/>
    <property type="evidence" value="ECO:0007669"/>
    <property type="project" value="UniProtKB-UniRule"/>
</dbReference>
<dbReference type="GO" id="GO:0006108">
    <property type="term" value="P:malate metabolic process"/>
    <property type="evidence" value="ECO:0007669"/>
    <property type="project" value="InterPro"/>
</dbReference>
<dbReference type="GO" id="GO:0006099">
    <property type="term" value="P:tricarboxylic acid cycle"/>
    <property type="evidence" value="ECO:0007669"/>
    <property type="project" value="UniProtKB-UniRule"/>
</dbReference>
<dbReference type="CDD" id="cd01337">
    <property type="entry name" value="MDH_glyoxysomal_mitochondrial"/>
    <property type="match status" value="1"/>
</dbReference>
<dbReference type="FunFam" id="3.40.50.720:FF:000017">
    <property type="entry name" value="Malate dehydrogenase"/>
    <property type="match status" value="1"/>
</dbReference>
<dbReference type="FunFam" id="3.90.110.10:FF:000001">
    <property type="entry name" value="Malate dehydrogenase"/>
    <property type="match status" value="1"/>
</dbReference>
<dbReference type="Gene3D" id="3.90.110.10">
    <property type="entry name" value="Lactate dehydrogenase/glycoside hydrolase, family 4, C-terminal"/>
    <property type="match status" value="1"/>
</dbReference>
<dbReference type="Gene3D" id="3.40.50.720">
    <property type="entry name" value="NAD(P)-binding Rossmann-like Domain"/>
    <property type="match status" value="1"/>
</dbReference>
<dbReference type="HAMAP" id="MF_01516">
    <property type="entry name" value="Malate_dehydrog_1"/>
    <property type="match status" value="1"/>
</dbReference>
<dbReference type="InterPro" id="IPR001557">
    <property type="entry name" value="L-lactate/malate_DH"/>
</dbReference>
<dbReference type="InterPro" id="IPR022383">
    <property type="entry name" value="Lactate/malate_DH_C"/>
</dbReference>
<dbReference type="InterPro" id="IPR001236">
    <property type="entry name" value="Lactate/malate_DH_N"/>
</dbReference>
<dbReference type="InterPro" id="IPR015955">
    <property type="entry name" value="Lactate_DH/Glyco_Ohase_4_C"/>
</dbReference>
<dbReference type="InterPro" id="IPR001252">
    <property type="entry name" value="Malate_DH_AS"/>
</dbReference>
<dbReference type="InterPro" id="IPR010097">
    <property type="entry name" value="Malate_DH_type1"/>
</dbReference>
<dbReference type="InterPro" id="IPR023958">
    <property type="entry name" value="Malate_DH_type1_bac"/>
</dbReference>
<dbReference type="InterPro" id="IPR036291">
    <property type="entry name" value="NAD(P)-bd_dom_sf"/>
</dbReference>
<dbReference type="NCBIfam" id="TIGR01772">
    <property type="entry name" value="MDH_euk_gproteo"/>
    <property type="match status" value="1"/>
</dbReference>
<dbReference type="PANTHER" id="PTHR11540">
    <property type="entry name" value="MALATE AND LACTATE DEHYDROGENASE"/>
    <property type="match status" value="1"/>
</dbReference>
<dbReference type="PANTHER" id="PTHR11540:SF16">
    <property type="entry name" value="MALATE DEHYDROGENASE, MITOCHONDRIAL"/>
    <property type="match status" value="1"/>
</dbReference>
<dbReference type="Pfam" id="PF02866">
    <property type="entry name" value="Ldh_1_C"/>
    <property type="match status" value="1"/>
</dbReference>
<dbReference type="Pfam" id="PF00056">
    <property type="entry name" value="Ldh_1_N"/>
    <property type="match status" value="1"/>
</dbReference>
<dbReference type="PIRSF" id="PIRSF000102">
    <property type="entry name" value="Lac_mal_DH"/>
    <property type="match status" value="1"/>
</dbReference>
<dbReference type="SUPFAM" id="SSF56327">
    <property type="entry name" value="LDH C-terminal domain-like"/>
    <property type="match status" value="1"/>
</dbReference>
<dbReference type="SUPFAM" id="SSF51735">
    <property type="entry name" value="NAD(P)-binding Rossmann-fold domains"/>
    <property type="match status" value="1"/>
</dbReference>
<dbReference type="PROSITE" id="PS00068">
    <property type="entry name" value="MDH"/>
    <property type="match status" value="1"/>
</dbReference>
<reference key="1">
    <citation type="submission" date="2008-02" db="EMBL/GenBank/DDBJ databases">
        <title>Complete sequence of Haemophilus somnus 2336.</title>
        <authorList>
            <consortium name="US DOE Joint Genome Institute"/>
            <person name="Siddaramappa S."/>
            <person name="Duncan A.J."/>
            <person name="Challacombe J.F."/>
            <person name="Rainey D."/>
            <person name="Gillaspy A.F."/>
            <person name="Carson M."/>
            <person name="Gipson J."/>
            <person name="Gipson M."/>
            <person name="Bruce D."/>
            <person name="Detter J.C."/>
            <person name="Han C.S."/>
            <person name="Land M."/>
            <person name="Tapia R."/>
            <person name="Thompson L.S."/>
            <person name="Orvis J."/>
            <person name="Zaitshik J."/>
            <person name="Barnes G."/>
            <person name="Brettin T.S."/>
            <person name="Dyer D.W."/>
            <person name="Inzana T.J."/>
        </authorList>
    </citation>
    <scope>NUCLEOTIDE SEQUENCE [LARGE SCALE GENOMIC DNA]</scope>
    <source>
        <strain>2336</strain>
    </source>
</reference>
<proteinExistence type="inferred from homology"/>
<comment type="function">
    <text evidence="1">Catalyzes the reversible oxidation of malate to oxaloacetate.</text>
</comment>
<comment type="catalytic activity">
    <reaction evidence="1">
        <text>(S)-malate + NAD(+) = oxaloacetate + NADH + H(+)</text>
        <dbReference type="Rhea" id="RHEA:21432"/>
        <dbReference type="ChEBI" id="CHEBI:15378"/>
        <dbReference type="ChEBI" id="CHEBI:15589"/>
        <dbReference type="ChEBI" id="CHEBI:16452"/>
        <dbReference type="ChEBI" id="CHEBI:57540"/>
        <dbReference type="ChEBI" id="CHEBI:57945"/>
        <dbReference type="EC" id="1.1.1.37"/>
    </reaction>
</comment>
<comment type="subunit">
    <text evidence="1">Homodimer.</text>
</comment>
<comment type="similarity">
    <text evidence="1">Belongs to the LDH/MDH superfamily. MDH type 1 family.</text>
</comment>
<evidence type="ECO:0000255" key="1">
    <source>
        <dbReference type="HAMAP-Rule" id="MF_01516"/>
    </source>
</evidence>
<name>MDH_HISS2</name>
<keyword id="KW-0520">NAD</keyword>
<keyword id="KW-0560">Oxidoreductase</keyword>
<keyword id="KW-0816">Tricarboxylic acid cycle</keyword>